<dbReference type="EMBL" id="U94515">
    <property type="protein sequence ID" value="AAC26163.1"/>
    <property type="molecule type" value="mRNA"/>
</dbReference>
<dbReference type="SMR" id="O77009"/>
<dbReference type="GO" id="GO:0005576">
    <property type="term" value="C:extracellular region"/>
    <property type="evidence" value="ECO:0007669"/>
    <property type="project" value="UniProtKB-SubCell"/>
</dbReference>
<dbReference type="GO" id="GO:0042311">
    <property type="term" value="P:vasodilation"/>
    <property type="evidence" value="ECO:0007669"/>
    <property type="project" value="UniProtKB-KW"/>
</dbReference>
<dbReference type="CDD" id="cd00161">
    <property type="entry name" value="beta-trefoil_Ricin-like"/>
    <property type="match status" value="1"/>
</dbReference>
<dbReference type="Gene3D" id="2.80.10.50">
    <property type="match status" value="1"/>
</dbReference>
<dbReference type="InterPro" id="IPR035992">
    <property type="entry name" value="Ricin_B-like_lectins"/>
</dbReference>
<dbReference type="SUPFAM" id="SSF50370">
    <property type="entry name" value="Ricin B-like lectins"/>
    <property type="match status" value="1"/>
</dbReference>
<sequence length="152" mass="17334">MSITQSFFVLTLAIFGAASDNPIADRKCIVISDGDLVMHERKPGQEFPYYVYMIPKGTEYDDQRWILESVGGDHYKLKNKFSGRYLVYGTFDYFLTAGAAVREMDHFKFTADGTGKYDISSKANGHPRSRGKNWGVMKDGEKHYFTVENCQE</sequence>
<feature type="signal peptide" evidence="1">
    <location>
        <begin position="1"/>
        <end position="18"/>
    </location>
</feature>
<feature type="chain" id="PRO_5004160041" description="Erythema protein SVEP" evidence="1">
    <location>
        <begin position="19"/>
        <end position="152"/>
    </location>
</feature>
<organism evidence="5">
    <name type="scientific">Simulium vittatum</name>
    <name type="common">Striped black fly</name>
    <dbReference type="NCBI Taxonomy" id="7192"/>
    <lineage>
        <taxon>Eukaryota</taxon>
        <taxon>Metazoa</taxon>
        <taxon>Ecdysozoa</taxon>
        <taxon>Arthropoda</taxon>
        <taxon>Hexapoda</taxon>
        <taxon>Insecta</taxon>
        <taxon>Pterygota</taxon>
        <taxon>Neoptera</taxon>
        <taxon>Endopterygota</taxon>
        <taxon>Diptera</taxon>
        <taxon>Nematocera</taxon>
        <taxon>Chironomoidea</taxon>
        <taxon>Simuliidae</taxon>
        <taxon>Simulium</taxon>
    </lineage>
</organism>
<comment type="function">
    <text evidence="2">Salivary vasoactive peptide; induces vasodilatation in bioassay with rabbit aortic rings.</text>
</comment>
<comment type="subcellular location">
    <subcellularLocation>
        <location evidence="4">Secreted</location>
    </subcellularLocation>
</comment>
<comment type="tissue specificity">
    <text evidence="2">Salivary gland (at protein level).</text>
</comment>
<protein>
    <recommendedName>
        <fullName evidence="3">Erythema protein SVEP</fullName>
    </recommendedName>
</protein>
<keyword id="KW-0964">Secreted</keyword>
<keyword id="KW-0732">Signal</keyword>
<keyword id="KW-0838">Vasoactive</keyword>
<keyword id="KW-0840">Vasodilator</keyword>
<name>SVEP_SIMVI</name>
<evidence type="ECO:0000255" key="1"/>
<evidence type="ECO:0000269" key="2">
    <source>
    </source>
</evidence>
<evidence type="ECO:0000303" key="3">
    <source>
    </source>
</evidence>
<evidence type="ECO:0000305" key="4"/>
<evidence type="ECO:0000312" key="5">
    <source>
        <dbReference type="EMBL" id="AAC26163.1"/>
    </source>
</evidence>
<proteinExistence type="evidence at protein level"/>
<reference evidence="5" key="1">
    <citation type="journal article" date="1998" name="J. Exp. Biol.">
        <title>Analyses of cDNA and recombinant protein for a potent vasoactive protein in saliva of a blood-feeding black fly, Simulium vittatum.</title>
        <authorList>
            <person name="Cupp M.S."/>
            <person name="Ribeiro J.M."/>
            <person name="Champagne D.E."/>
            <person name="Cupp E.W."/>
        </authorList>
    </citation>
    <scope>NUCLEOTIDE SEQUENCE [MRNA]</scope>
    <scope>IDENTIFICATION BY MASS SPECTROMETRY</scope>
    <scope>FUNCTION</scope>
    <scope>TISSUE SPECIFICITY</scope>
    <source>
        <tissue evidence="5">Salivary gland</tissue>
    </source>
</reference>
<accession>O77009</accession>